<comment type="function">
    <text evidence="2">This multifunctional protein catalyzes the formation, breakage and rearrangement of disulfide bonds. At the cell surface, seems to act as a reductase that cleaves disulfide bonds of proteins attached to the cell. May therefore cause structural modifications of exofacial proteins. Inside the cell, seems to form/rearrange disulfide bonds of nascent proteins. At high concentrations and following phosphorylation by FAM20C, functions as a chaperone that inhibits aggregation of misfolded proteins. At low concentrations, facilitates aggregation (anti-chaperone activity). May be involved with other chaperones in the structural modification of the TG precursor in hormone biogenesis. Also acts as a structural subunit of various enzymes such as prolyl 4-hydroxylase and microsomal triacylglycerol transfer protein MTTP. Receptor for LGALS9; the interaction retains P4HB at the cell surface of Th2 T helper cells, increasing disulfide reductase activity at the plasma membrane, altering the plasma membrane redox state and enhancing cell migration.</text>
</comment>
<comment type="catalytic activity">
    <reaction evidence="2">
        <text>Catalyzes the rearrangement of -S-S- bonds in proteins.</text>
        <dbReference type="EC" id="5.3.4.1"/>
    </reaction>
</comment>
<comment type="subunit">
    <text evidence="1 2 3">Heterodimer; heterodimerizes with the protein microsomal triglyceride transfer MTTP. Homodimer. Homodimer. Monomers and homotetramers may also occur. Interacts with P4HA2, forming a heterotetramer consisting of 2 alpha subunits (P4HA2) and 2 beta (P4HB), where P4HB plays the role of a structural subunit; this tetramer catalyzes the formation of 4-hydroxyproline in collagen (By similarity). Also constitutes the structural subunit of the microsomal triacylglycerol transfer protein MTTP in mammalian cells. Stabilizes both enzymes and retain them in the ER without contributing to the catalytic activity. Binds UBQLN1. Interacts with ERO1B. Interacts with ILDR2 (By similarity). Interacts with ERN1/IRE1A (via N-terminus); the interaction is enhanced by phosphorylation of P4HB by FAM20C in response to endoplasmic reticulum stress and results in attenuation of ERN1 activity (By similarity).</text>
</comment>
<comment type="subcellular location">
    <subcellularLocation>
        <location evidence="2">Endoplasmic reticulum</location>
    </subcellularLocation>
    <subcellularLocation>
        <location evidence="2">Endoplasmic reticulum lumen</location>
    </subcellularLocation>
    <subcellularLocation>
        <location evidence="2">Melanosome</location>
    </subcellularLocation>
    <subcellularLocation>
        <location evidence="3">Cell membrane</location>
        <topology evidence="7">Peripheral membrane protein</topology>
    </subcellularLocation>
    <text evidence="2">Highly abundant. In some cell types, seems to be also secreted or associated with the plasma membrane, where it undergoes constant shedding and replacement from intracellular sources. Localizes near CD4-enriched regions on lymphoid cell surfaces. Colocalizes with MTTP in the endoplasmic reticulum.</text>
</comment>
<comment type="PTM">
    <text evidence="2">Phosphorylation of Ser-359 by FAM20C is induced by endoplasmic reticulum stress and results in a functional switch from oxidoreductase to molecular chaperone. It also promotes interaction with ERN1.</text>
</comment>
<comment type="similarity">
    <text evidence="7">Belongs to the protein disulfide isomerase family.</text>
</comment>
<reference key="1">
    <citation type="journal article" date="2006" name="J. Med. Primatol.">
        <title>Molecular cloning and gene expression of endoplasmic reticulum stress proteins in Japanese monkey, Macaca fuscata.</title>
        <authorList>
            <person name="Higashino A."/>
            <person name="Fukuhara R."/>
            <person name="Tezuka T."/>
            <person name="Kageyama T."/>
        </authorList>
    </citation>
    <scope>NUCLEOTIDE SEQUENCE [MRNA]</scope>
</reference>
<evidence type="ECO:0000250" key="1"/>
<evidence type="ECO:0000250" key="2">
    <source>
        <dbReference type="UniProtKB" id="P07237"/>
    </source>
</evidence>
<evidence type="ECO:0000250" key="3">
    <source>
        <dbReference type="UniProtKB" id="P09103"/>
    </source>
</evidence>
<evidence type="ECO:0000255" key="4">
    <source>
        <dbReference type="PROSITE-ProRule" id="PRU00691"/>
    </source>
</evidence>
<evidence type="ECO:0000255" key="5">
    <source>
        <dbReference type="PROSITE-ProRule" id="PRU10138"/>
    </source>
</evidence>
<evidence type="ECO:0000256" key="6">
    <source>
        <dbReference type="SAM" id="MobiDB-lite"/>
    </source>
</evidence>
<evidence type="ECO:0000305" key="7"/>
<organism>
    <name type="scientific">Macaca fuscata fuscata</name>
    <name type="common">Japanese macaque</name>
    <dbReference type="NCBI Taxonomy" id="9543"/>
    <lineage>
        <taxon>Eukaryota</taxon>
        <taxon>Metazoa</taxon>
        <taxon>Chordata</taxon>
        <taxon>Craniata</taxon>
        <taxon>Vertebrata</taxon>
        <taxon>Euteleostomi</taxon>
        <taxon>Mammalia</taxon>
        <taxon>Eutheria</taxon>
        <taxon>Euarchontoglires</taxon>
        <taxon>Primates</taxon>
        <taxon>Haplorrhini</taxon>
        <taxon>Catarrhini</taxon>
        <taxon>Cercopithecidae</taxon>
        <taxon>Cercopithecinae</taxon>
        <taxon>Macaca</taxon>
    </lineage>
</organism>
<protein>
    <recommendedName>
        <fullName>Protein disulfide-isomerase</fullName>
        <shortName>PDI</shortName>
        <ecNumber evidence="2">5.3.4.1</ecNumber>
    </recommendedName>
    <alternativeName>
        <fullName>Prolyl 4-hydroxylase subunit beta</fullName>
    </alternativeName>
</protein>
<keyword id="KW-0007">Acetylation</keyword>
<keyword id="KW-1003">Cell membrane</keyword>
<keyword id="KW-0143">Chaperone</keyword>
<keyword id="KW-1015">Disulfide bond</keyword>
<keyword id="KW-0256">Endoplasmic reticulum</keyword>
<keyword id="KW-0413">Isomerase</keyword>
<keyword id="KW-0472">Membrane</keyword>
<keyword id="KW-0597">Phosphoprotein</keyword>
<keyword id="KW-0676">Redox-active center</keyword>
<keyword id="KW-0677">Repeat</keyword>
<keyword id="KW-0732">Signal</keyword>
<feature type="signal peptide" evidence="1">
    <location>
        <begin position="1"/>
        <end position="19"/>
    </location>
</feature>
<feature type="chain" id="PRO_0000246155" description="Protein disulfide-isomerase">
    <location>
        <begin position="20"/>
        <end position="510"/>
    </location>
</feature>
<feature type="domain" description="Thioredoxin 1" evidence="4">
    <location>
        <begin position="20"/>
        <end position="136"/>
    </location>
</feature>
<feature type="domain" description="Thioredoxin 2" evidence="4">
    <location>
        <begin position="351"/>
        <end position="477"/>
    </location>
</feature>
<feature type="region of interest" description="Disordered" evidence="6">
    <location>
        <begin position="473"/>
        <end position="510"/>
    </location>
</feature>
<feature type="short sequence motif" description="Prevents secretion from ER" evidence="5">
    <location>
        <begin position="507"/>
        <end position="510"/>
    </location>
</feature>
<feature type="compositionally biased region" description="Acidic residues" evidence="6">
    <location>
        <begin position="480"/>
        <end position="502"/>
    </location>
</feature>
<feature type="active site" description="Nucleophile" evidence="1">
    <location>
        <position position="55"/>
    </location>
</feature>
<feature type="active site" description="Nucleophile" evidence="1">
    <location>
        <position position="58"/>
    </location>
</feature>
<feature type="active site" description="Nucleophile" evidence="1">
    <location>
        <position position="399"/>
    </location>
</feature>
<feature type="active site" description="Nucleophile" evidence="1">
    <location>
        <position position="402"/>
    </location>
</feature>
<feature type="site" description="Contributes to redox potential value" evidence="1">
    <location>
        <position position="56"/>
    </location>
</feature>
<feature type="site" description="Contributes to redox potential value" evidence="1">
    <location>
        <position position="57"/>
    </location>
</feature>
<feature type="site" description="Lowers pKa of C-terminal Cys of first active site" evidence="1">
    <location>
        <position position="122"/>
    </location>
</feature>
<feature type="site" description="Contributes to redox potential value" evidence="1">
    <location>
        <position position="400"/>
    </location>
</feature>
<feature type="site" description="Contributes to redox potential value" evidence="1">
    <location>
        <position position="401"/>
    </location>
</feature>
<feature type="site" description="Lowers pKa of C-terminal Cys of second active site" evidence="1">
    <location>
        <position position="463"/>
    </location>
</feature>
<feature type="modified residue" description="N6-acetyllysine" evidence="3">
    <location>
        <position position="202"/>
    </location>
</feature>
<feature type="modified residue" description="N6-succinyllysine" evidence="3">
    <location>
        <position position="224"/>
    </location>
</feature>
<feature type="modified residue" description="N6-succinyllysine" evidence="3">
    <location>
        <position position="273"/>
    </location>
</feature>
<feature type="modified residue" description="Phosphoserine" evidence="2">
    <location>
        <position position="333"/>
    </location>
</feature>
<feature type="modified residue" description="Phosphoserine" evidence="2">
    <location>
        <position position="359"/>
    </location>
</feature>
<feature type="modified residue" description="Phosphoserine" evidence="2">
    <location>
        <position position="429"/>
    </location>
</feature>
<feature type="disulfide bond" description="Redox-active" evidence="4">
    <location>
        <begin position="55"/>
        <end position="58"/>
    </location>
</feature>
<feature type="disulfide bond" description="Redox-active" evidence="4">
    <location>
        <begin position="399"/>
        <end position="402"/>
    </location>
</feature>
<gene>
    <name type="primary">P4HB</name>
    <name type="synonym">PDI</name>
    <name type="synonym">PDIA1</name>
</gene>
<name>PDIA1_MACFU</name>
<proteinExistence type="evidence at transcript level"/>
<accession>Q2HWU2</accession>
<dbReference type="EC" id="5.3.4.1" evidence="2"/>
<dbReference type="EMBL" id="AB232156">
    <property type="protein sequence ID" value="BAE79726.1"/>
    <property type="molecule type" value="mRNA"/>
</dbReference>
<dbReference type="BMRB" id="Q2HWU2"/>
<dbReference type="SMR" id="Q2HWU2"/>
<dbReference type="GO" id="GO:0005783">
    <property type="term" value="C:endoplasmic reticulum"/>
    <property type="evidence" value="ECO:0000314"/>
    <property type="project" value="MGI"/>
</dbReference>
<dbReference type="GO" id="GO:0005788">
    <property type="term" value="C:endoplasmic reticulum lumen"/>
    <property type="evidence" value="ECO:0007669"/>
    <property type="project" value="UniProtKB-SubCell"/>
</dbReference>
<dbReference type="GO" id="GO:0009897">
    <property type="term" value="C:external side of plasma membrane"/>
    <property type="evidence" value="ECO:0007669"/>
    <property type="project" value="TreeGrafter"/>
</dbReference>
<dbReference type="GO" id="GO:0042470">
    <property type="term" value="C:melanosome"/>
    <property type="evidence" value="ECO:0007669"/>
    <property type="project" value="UniProtKB-SubCell"/>
</dbReference>
<dbReference type="GO" id="GO:0003756">
    <property type="term" value="F:protein disulfide isomerase activity"/>
    <property type="evidence" value="ECO:0007669"/>
    <property type="project" value="UniProtKB-EC"/>
</dbReference>
<dbReference type="GO" id="GO:0046982">
    <property type="term" value="F:protein heterodimerization activity"/>
    <property type="evidence" value="ECO:0000250"/>
    <property type="project" value="UniProtKB"/>
</dbReference>
<dbReference type="GO" id="GO:0006457">
    <property type="term" value="P:protein folding"/>
    <property type="evidence" value="ECO:0007669"/>
    <property type="project" value="TreeGrafter"/>
</dbReference>
<dbReference type="GO" id="GO:0034976">
    <property type="term" value="P:response to endoplasmic reticulum stress"/>
    <property type="evidence" value="ECO:0007669"/>
    <property type="project" value="TreeGrafter"/>
</dbReference>
<dbReference type="CDD" id="cd02961">
    <property type="entry name" value="PDI_a_family"/>
    <property type="match status" value="1"/>
</dbReference>
<dbReference type="CDD" id="cd02995">
    <property type="entry name" value="PDI_a_PDI_a'_C"/>
    <property type="match status" value="1"/>
</dbReference>
<dbReference type="CDD" id="cd02982">
    <property type="entry name" value="PDI_b'_family"/>
    <property type="match status" value="1"/>
</dbReference>
<dbReference type="CDD" id="cd02981">
    <property type="entry name" value="PDI_b_family"/>
    <property type="match status" value="1"/>
</dbReference>
<dbReference type="FunFam" id="3.40.30.10:FF:000023">
    <property type="entry name" value="Protein disulfide-isomerase"/>
    <property type="match status" value="1"/>
</dbReference>
<dbReference type="FunFam" id="3.40.30.10:FF:000030">
    <property type="entry name" value="Protein disulfide-isomerase"/>
    <property type="match status" value="1"/>
</dbReference>
<dbReference type="FunFam" id="3.40.30.10:FF:000110">
    <property type="entry name" value="Protein disulfide-isomerase"/>
    <property type="match status" value="1"/>
</dbReference>
<dbReference type="FunFam" id="3.40.30.10:FF:000027">
    <property type="entry name" value="protein disulfide-isomerase A2"/>
    <property type="match status" value="1"/>
</dbReference>
<dbReference type="Gene3D" id="3.40.30.10">
    <property type="entry name" value="Glutaredoxin"/>
    <property type="match status" value="4"/>
</dbReference>
<dbReference type="InterPro" id="IPR005788">
    <property type="entry name" value="PDI_thioredoxin-like_dom"/>
</dbReference>
<dbReference type="InterPro" id="IPR005792">
    <property type="entry name" value="Prot_disulphide_isomerase"/>
</dbReference>
<dbReference type="InterPro" id="IPR036249">
    <property type="entry name" value="Thioredoxin-like_sf"/>
</dbReference>
<dbReference type="InterPro" id="IPR017937">
    <property type="entry name" value="Thioredoxin_CS"/>
</dbReference>
<dbReference type="InterPro" id="IPR013766">
    <property type="entry name" value="Thioredoxin_domain"/>
</dbReference>
<dbReference type="NCBIfam" id="TIGR01130">
    <property type="entry name" value="ER_PDI_fam"/>
    <property type="match status" value="1"/>
</dbReference>
<dbReference type="NCBIfam" id="TIGR01126">
    <property type="entry name" value="pdi_dom"/>
    <property type="match status" value="2"/>
</dbReference>
<dbReference type="PANTHER" id="PTHR18929">
    <property type="entry name" value="PROTEIN DISULFIDE ISOMERASE"/>
    <property type="match status" value="1"/>
</dbReference>
<dbReference type="PANTHER" id="PTHR18929:SF101">
    <property type="entry name" value="PROTEIN DISULFIDE-ISOMERASE"/>
    <property type="match status" value="1"/>
</dbReference>
<dbReference type="Pfam" id="PF00085">
    <property type="entry name" value="Thioredoxin"/>
    <property type="match status" value="2"/>
</dbReference>
<dbReference type="Pfam" id="PF13848">
    <property type="entry name" value="Thioredoxin_6"/>
    <property type="match status" value="1"/>
</dbReference>
<dbReference type="PRINTS" id="PR00421">
    <property type="entry name" value="THIOREDOXIN"/>
</dbReference>
<dbReference type="SUPFAM" id="SSF52833">
    <property type="entry name" value="Thioredoxin-like"/>
    <property type="match status" value="4"/>
</dbReference>
<dbReference type="PROSITE" id="PS00014">
    <property type="entry name" value="ER_TARGET"/>
    <property type="match status" value="1"/>
</dbReference>
<dbReference type="PROSITE" id="PS00194">
    <property type="entry name" value="THIOREDOXIN_1"/>
    <property type="match status" value="2"/>
</dbReference>
<dbReference type="PROSITE" id="PS51352">
    <property type="entry name" value="THIOREDOXIN_2"/>
    <property type="match status" value="2"/>
</dbReference>
<sequence>MLRRALLCLAVAAAPGLYADAPEEEDHVLVLRKSNFAEALAAHKYLLVEFYAPWCGHCKALAPEYAKAAGKLKAEGSEIRLAKVDATEESDLAQQYGVRGYPTIKFFRNGDTASPKEYTAGREADDIVNWLKKRTGPAATTLPDGAAAESLVESSEVAVIGFFKDVESDSAKQFLQAAEAIDDIPFGITSNSDVFSKYQLDKDGVVLFKKFDEGRNNFEGEVTKENLLDFIKYNQLPLVIEFTEQTAPKIFGGEIKTHILLFLPKSVSDYDGKLSNFKTAAESFKGKILFIFIDSDHTDNQRILEFFGLKKEECPAVRLITLEEEMTKYKPESDELTAERITEFCHRFLEGKIKPHLMSQELPEDWDKQPVKVLVGKNFEEVAFDENKNVFVEFYAPWCGHCKQLAPIWDKLGETYKDHENIVIAKMDSTANEVEAIKVHSFPTLKFFPASVDRTVIDYNGERTLDGFKKFLESGGQDGAGDDDDLEDLEEAEEPDMEEDDDQKAVKDEL</sequence>